<reference key="1">
    <citation type="journal article" date="2008" name="J. Bacteriol.">
        <title>The pangenome structure of Escherichia coli: comparative genomic analysis of E. coli commensal and pathogenic isolates.</title>
        <authorList>
            <person name="Rasko D.A."/>
            <person name="Rosovitz M.J."/>
            <person name="Myers G.S.A."/>
            <person name="Mongodin E.F."/>
            <person name="Fricke W.F."/>
            <person name="Gajer P."/>
            <person name="Crabtree J."/>
            <person name="Sebaihia M."/>
            <person name="Thomson N.R."/>
            <person name="Chaudhuri R."/>
            <person name="Henderson I.R."/>
            <person name="Sperandio V."/>
            <person name="Ravel J."/>
        </authorList>
    </citation>
    <scope>NUCLEOTIDE SEQUENCE [LARGE SCALE GENOMIC DNA]</scope>
    <source>
        <strain>HS</strain>
    </source>
</reference>
<gene>
    <name evidence="1" type="primary">rsmH</name>
    <name type="synonym">mraW</name>
    <name type="ordered locus">EcHS_A0088</name>
</gene>
<sequence length="313" mass="34878">MMENYKHTTVLLDEAVNGLNIRPDGIYIDGTFGRGGHSRLILSQLGEEGRLLAIDRDPQAIAVAKTIDDPRFSIIHGPFSALGEYVAERDLIGKIDGILLDLGVSSPQLDDAERGFSFMRDGPLDMRMDPTRGQSAAEWLQTAEEADIAWVLKTYGEERFAKRIARAIVERNREQPMTRTKELAEVVAAATPVKDKFKHPATRTFQAVRIWVNSELEEIEQALKSSLNVLAPGGRLSIISFHSLEDRIVKRFMRENSRGPQVPAGLPMTEEQLKKLGGRQLRALGKLMPGEEEVAENPRARSSVLRIAERTNA</sequence>
<protein>
    <recommendedName>
        <fullName evidence="1">Ribosomal RNA small subunit methyltransferase H</fullName>
        <ecNumber evidence="1">2.1.1.199</ecNumber>
    </recommendedName>
    <alternativeName>
        <fullName evidence="1">16S rRNA m(4)C1402 methyltransferase</fullName>
    </alternativeName>
    <alternativeName>
        <fullName evidence="1">rRNA (cytosine-N(4)-)-methyltransferase RsmH</fullName>
    </alternativeName>
</protein>
<feature type="chain" id="PRO_0000386886" description="Ribosomal RNA small subunit methyltransferase H">
    <location>
        <begin position="1"/>
        <end position="313"/>
    </location>
</feature>
<feature type="binding site" evidence="1">
    <location>
        <begin position="35"/>
        <end position="37"/>
    </location>
    <ligand>
        <name>S-adenosyl-L-methionine</name>
        <dbReference type="ChEBI" id="CHEBI:59789"/>
    </ligand>
</feature>
<feature type="binding site" evidence="1">
    <location>
        <position position="55"/>
    </location>
    <ligand>
        <name>S-adenosyl-L-methionine</name>
        <dbReference type="ChEBI" id="CHEBI:59789"/>
    </ligand>
</feature>
<feature type="binding site" evidence="1">
    <location>
        <position position="79"/>
    </location>
    <ligand>
        <name>S-adenosyl-L-methionine</name>
        <dbReference type="ChEBI" id="CHEBI:59789"/>
    </ligand>
</feature>
<feature type="binding site" evidence="1">
    <location>
        <position position="101"/>
    </location>
    <ligand>
        <name>S-adenosyl-L-methionine</name>
        <dbReference type="ChEBI" id="CHEBI:59789"/>
    </ligand>
</feature>
<feature type="binding site" evidence="1">
    <location>
        <position position="108"/>
    </location>
    <ligand>
        <name>S-adenosyl-L-methionine</name>
        <dbReference type="ChEBI" id="CHEBI:59789"/>
    </ligand>
</feature>
<evidence type="ECO:0000255" key="1">
    <source>
        <dbReference type="HAMAP-Rule" id="MF_01007"/>
    </source>
</evidence>
<organism>
    <name type="scientific">Escherichia coli O9:H4 (strain HS)</name>
    <dbReference type="NCBI Taxonomy" id="331112"/>
    <lineage>
        <taxon>Bacteria</taxon>
        <taxon>Pseudomonadati</taxon>
        <taxon>Pseudomonadota</taxon>
        <taxon>Gammaproteobacteria</taxon>
        <taxon>Enterobacterales</taxon>
        <taxon>Enterobacteriaceae</taxon>
        <taxon>Escherichia</taxon>
    </lineage>
</organism>
<proteinExistence type="inferred from homology"/>
<accession>A7ZW34</accession>
<dbReference type="EC" id="2.1.1.199" evidence="1"/>
<dbReference type="EMBL" id="CP000802">
    <property type="protein sequence ID" value="ABV04488.1"/>
    <property type="molecule type" value="Genomic_DNA"/>
</dbReference>
<dbReference type="RefSeq" id="WP_000970479.1">
    <property type="nucleotide sequence ID" value="NC_009800.1"/>
</dbReference>
<dbReference type="SMR" id="A7ZW34"/>
<dbReference type="GeneID" id="86862592"/>
<dbReference type="KEGG" id="ecx:EcHS_A0088"/>
<dbReference type="HOGENOM" id="CLU_038422_2_0_6"/>
<dbReference type="GO" id="GO:0005737">
    <property type="term" value="C:cytoplasm"/>
    <property type="evidence" value="ECO:0007669"/>
    <property type="project" value="UniProtKB-SubCell"/>
</dbReference>
<dbReference type="GO" id="GO:0071424">
    <property type="term" value="F:rRNA (cytosine-N4-)-methyltransferase activity"/>
    <property type="evidence" value="ECO:0007669"/>
    <property type="project" value="UniProtKB-UniRule"/>
</dbReference>
<dbReference type="GO" id="GO:0070475">
    <property type="term" value="P:rRNA base methylation"/>
    <property type="evidence" value="ECO:0007669"/>
    <property type="project" value="UniProtKB-UniRule"/>
</dbReference>
<dbReference type="FunFam" id="1.10.150.170:FF:000001">
    <property type="entry name" value="Ribosomal RNA small subunit methyltransferase H"/>
    <property type="match status" value="1"/>
</dbReference>
<dbReference type="Gene3D" id="1.10.150.170">
    <property type="entry name" value="Putative methyltransferase TM0872, insert domain"/>
    <property type="match status" value="1"/>
</dbReference>
<dbReference type="Gene3D" id="3.40.50.150">
    <property type="entry name" value="Vaccinia Virus protein VP39"/>
    <property type="match status" value="1"/>
</dbReference>
<dbReference type="HAMAP" id="MF_01007">
    <property type="entry name" value="16SrRNA_methyltr_H"/>
    <property type="match status" value="1"/>
</dbReference>
<dbReference type="InterPro" id="IPR002903">
    <property type="entry name" value="RsmH"/>
</dbReference>
<dbReference type="InterPro" id="IPR023397">
    <property type="entry name" value="SAM-dep_MeTrfase_MraW_recog"/>
</dbReference>
<dbReference type="InterPro" id="IPR029063">
    <property type="entry name" value="SAM-dependent_MTases_sf"/>
</dbReference>
<dbReference type="NCBIfam" id="TIGR00006">
    <property type="entry name" value="16S rRNA (cytosine(1402)-N(4))-methyltransferase RsmH"/>
    <property type="match status" value="1"/>
</dbReference>
<dbReference type="PANTHER" id="PTHR11265:SF0">
    <property type="entry name" value="12S RRNA N4-METHYLCYTIDINE METHYLTRANSFERASE"/>
    <property type="match status" value="1"/>
</dbReference>
<dbReference type="PANTHER" id="PTHR11265">
    <property type="entry name" value="S-ADENOSYL-METHYLTRANSFERASE MRAW"/>
    <property type="match status" value="1"/>
</dbReference>
<dbReference type="Pfam" id="PF01795">
    <property type="entry name" value="Methyltransf_5"/>
    <property type="match status" value="1"/>
</dbReference>
<dbReference type="PIRSF" id="PIRSF004486">
    <property type="entry name" value="MraW"/>
    <property type="match status" value="1"/>
</dbReference>
<dbReference type="SUPFAM" id="SSF81799">
    <property type="entry name" value="Putative methyltransferase TM0872, insert domain"/>
    <property type="match status" value="1"/>
</dbReference>
<dbReference type="SUPFAM" id="SSF53335">
    <property type="entry name" value="S-adenosyl-L-methionine-dependent methyltransferases"/>
    <property type="match status" value="1"/>
</dbReference>
<comment type="function">
    <text evidence="1">Specifically methylates the N4 position of cytidine in position 1402 (C1402) of 16S rRNA.</text>
</comment>
<comment type="catalytic activity">
    <reaction evidence="1">
        <text>cytidine(1402) in 16S rRNA + S-adenosyl-L-methionine = N(4)-methylcytidine(1402) in 16S rRNA + S-adenosyl-L-homocysteine + H(+)</text>
        <dbReference type="Rhea" id="RHEA:42928"/>
        <dbReference type="Rhea" id="RHEA-COMP:10286"/>
        <dbReference type="Rhea" id="RHEA-COMP:10287"/>
        <dbReference type="ChEBI" id="CHEBI:15378"/>
        <dbReference type="ChEBI" id="CHEBI:57856"/>
        <dbReference type="ChEBI" id="CHEBI:59789"/>
        <dbReference type="ChEBI" id="CHEBI:74506"/>
        <dbReference type="ChEBI" id="CHEBI:82748"/>
        <dbReference type="EC" id="2.1.1.199"/>
    </reaction>
</comment>
<comment type="subcellular location">
    <subcellularLocation>
        <location evidence="1">Cytoplasm</location>
    </subcellularLocation>
</comment>
<comment type="similarity">
    <text evidence="1">Belongs to the methyltransferase superfamily. RsmH family.</text>
</comment>
<keyword id="KW-0963">Cytoplasm</keyword>
<keyword id="KW-0489">Methyltransferase</keyword>
<keyword id="KW-0698">rRNA processing</keyword>
<keyword id="KW-0949">S-adenosyl-L-methionine</keyword>
<keyword id="KW-0808">Transferase</keyword>
<name>RSMH_ECOHS</name>